<protein>
    <recommendedName>
        <fullName evidence="1">Small ribosomal subunit protein uS5</fullName>
    </recommendedName>
    <alternativeName>
        <fullName evidence="2">30S ribosomal protein S5</fullName>
    </alternativeName>
</protein>
<organism>
    <name type="scientific">Chlorobaculum tepidum (strain ATCC 49652 / DSM 12025 / NBRC 103806 / TLS)</name>
    <name type="common">Chlorobium tepidum</name>
    <dbReference type="NCBI Taxonomy" id="194439"/>
    <lineage>
        <taxon>Bacteria</taxon>
        <taxon>Pseudomonadati</taxon>
        <taxon>Chlorobiota</taxon>
        <taxon>Chlorobiia</taxon>
        <taxon>Chlorobiales</taxon>
        <taxon>Chlorobiaceae</taxon>
        <taxon>Chlorobaculum</taxon>
    </lineage>
</organism>
<dbReference type="EMBL" id="AE006470">
    <property type="protein sequence ID" value="AAM73388.1"/>
    <property type="molecule type" value="Genomic_DNA"/>
</dbReference>
<dbReference type="RefSeq" id="NP_663046.1">
    <property type="nucleotide sequence ID" value="NC_002932.3"/>
</dbReference>
<dbReference type="RefSeq" id="WP_010933825.1">
    <property type="nucleotide sequence ID" value="NC_002932.3"/>
</dbReference>
<dbReference type="SMR" id="Q8KAI8"/>
<dbReference type="STRING" id="194439.CT2172"/>
<dbReference type="EnsemblBacteria" id="AAM73388">
    <property type="protein sequence ID" value="AAM73388"/>
    <property type="gene ID" value="CT2172"/>
</dbReference>
<dbReference type="KEGG" id="cte:CT2172"/>
<dbReference type="PATRIC" id="fig|194439.7.peg.1971"/>
<dbReference type="eggNOG" id="COG0098">
    <property type="taxonomic scope" value="Bacteria"/>
</dbReference>
<dbReference type="HOGENOM" id="CLU_065898_2_2_10"/>
<dbReference type="OrthoDB" id="9809045at2"/>
<dbReference type="Proteomes" id="UP000001007">
    <property type="component" value="Chromosome"/>
</dbReference>
<dbReference type="GO" id="GO:0015935">
    <property type="term" value="C:small ribosomal subunit"/>
    <property type="evidence" value="ECO:0007669"/>
    <property type="project" value="InterPro"/>
</dbReference>
<dbReference type="GO" id="GO:0019843">
    <property type="term" value="F:rRNA binding"/>
    <property type="evidence" value="ECO:0007669"/>
    <property type="project" value="UniProtKB-UniRule"/>
</dbReference>
<dbReference type="GO" id="GO:0003735">
    <property type="term" value="F:structural constituent of ribosome"/>
    <property type="evidence" value="ECO:0007669"/>
    <property type="project" value="InterPro"/>
</dbReference>
<dbReference type="GO" id="GO:0006412">
    <property type="term" value="P:translation"/>
    <property type="evidence" value="ECO:0007669"/>
    <property type="project" value="UniProtKB-UniRule"/>
</dbReference>
<dbReference type="FunFam" id="3.30.160.20:FF:000001">
    <property type="entry name" value="30S ribosomal protein S5"/>
    <property type="match status" value="1"/>
</dbReference>
<dbReference type="FunFam" id="3.30.230.10:FF:000002">
    <property type="entry name" value="30S ribosomal protein S5"/>
    <property type="match status" value="1"/>
</dbReference>
<dbReference type="Gene3D" id="3.30.160.20">
    <property type="match status" value="1"/>
</dbReference>
<dbReference type="Gene3D" id="3.30.230.10">
    <property type="match status" value="1"/>
</dbReference>
<dbReference type="HAMAP" id="MF_01307_B">
    <property type="entry name" value="Ribosomal_uS5_B"/>
    <property type="match status" value="1"/>
</dbReference>
<dbReference type="InterPro" id="IPR020568">
    <property type="entry name" value="Ribosomal_Su5_D2-typ_SF"/>
</dbReference>
<dbReference type="InterPro" id="IPR000851">
    <property type="entry name" value="Ribosomal_uS5"/>
</dbReference>
<dbReference type="InterPro" id="IPR005712">
    <property type="entry name" value="Ribosomal_uS5_bac-type"/>
</dbReference>
<dbReference type="InterPro" id="IPR005324">
    <property type="entry name" value="Ribosomal_uS5_C"/>
</dbReference>
<dbReference type="InterPro" id="IPR013810">
    <property type="entry name" value="Ribosomal_uS5_N"/>
</dbReference>
<dbReference type="InterPro" id="IPR018192">
    <property type="entry name" value="Ribosomal_uS5_N_CS"/>
</dbReference>
<dbReference type="InterPro" id="IPR014721">
    <property type="entry name" value="Ribsml_uS5_D2-typ_fold_subgr"/>
</dbReference>
<dbReference type="NCBIfam" id="TIGR01021">
    <property type="entry name" value="rpsE_bact"/>
    <property type="match status" value="1"/>
</dbReference>
<dbReference type="PANTHER" id="PTHR48277">
    <property type="entry name" value="MITOCHONDRIAL RIBOSOMAL PROTEIN S5"/>
    <property type="match status" value="1"/>
</dbReference>
<dbReference type="PANTHER" id="PTHR48277:SF1">
    <property type="entry name" value="MITOCHONDRIAL RIBOSOMAL PROTEIN S5"/>
    <property type="match status" value="1"/>
</dbReference>
<dbReference type="Pfam" id="PF00333">
    <property type="entry name" value="Ribosomal_S5"/>
    <property type="match status" value="1"/>
</dbReference>
<dbReference type="Pfam" id="PF03719">
    <property type="entry name" value="Ribosomal_S5_C"/>
    <property type="match status" value="1"/>
</dbReference>
<dbReference type="SUPFAM" id="SSF54768">
    <property type="entry name" value="dsRNA-binding domain-like"/>
    <property type="match status" value="1"/>
</dbReference>
<dbReference type="SUPFAM" id="SSF54211">
    <property type="entry name" value="Ribosomal protein S5 domain 2-like"/>
    <property type="match status" value="1"/>
</dbReference>
<dbReference type="PROSITE" id="PS00585">
    <property type="entry name" value="RIBOSOMAL_S5"/>
    <property type="match status" value="1"/>
</dbReference>
<dbReference type="PROSITE" id="PS50881">
    <property type="entry name" value="S5_DSRBD"/>
    <property type="match status" value="1"/>
</dbReference>
<accession>Q8KAI8</accession>
<gene>
    <name evidence="1" type="primary">rpsE</name>
    <name type="ordered locus">CT2172</name>
</gene>
<comment type="function">
    <text evidence="1">With S4 and S12 plays an important role in translational accuracy.</text>
</comment>
<comment type="function">
    <text evidence="1">Located at the back of the 30S subunit body where it stabilizes the conformation of the head with respect to the body.</text>
</comment>
<comment type="subunit">
    <text evidence="1">Part of the 30S ribosomal subunit. Contacts proteins S4 and S8.</text>
</comment>
<comment type="domain">
    <text>The N-terminal domain interacts with the head of the 30S subunit; the C-terminal domain interacts with the body and contacts protein S4. The interaction surface between S4 and S5 is involved in control of translational fidelity.</text>
</comment>
<comment type="similarity">
    <text evidence="1">Belongs to the universal ribosomal protein uS5 family.</text>
</comment>
<name>RS5_CHLTE</name>
<reference key="1">
    <citation type="journal article" date="2002" name="Proc. Natl. Acad. Sci. U.S.A.">
        <title>The complete genome sequence of Chlorobium tepidum TLS, a photosynthetic, anaerobic, green-sulfur bacterium.</title>
        <authorList>
            <person name="Eisen J.A."/>
            <person name="Nelson K.E."/>
            <person name="Paulsen I.T."/>
            <person name="Heidelberg J.F."/>
            <person name="Wu M."/>
            <person name="Dodson R.J."/>
            <person name="DeBoy R.T."/>
            <person name="Gwinn M.L."/>
            <person name="Nelson W.C."/>
            <person name="Haft D.H."/>
            <person name="Hickey E.K."/>
            <person name="Peterson J.D."/>
            <person name="Durkin A.S."/>
            <person name="Kolonay J.F."/>
            <person name="Yang F."/>
            <person name="Holt I.E."/>
            <person name="Umayam L.A."/>
            <person name="Mason T.M."/>
            <person name="Brenner M."/>
            <person name="Shea T.P."/>
            <person name="Parksey D.S."/>
            <person name="Nierman W.C."/>
            <person name="Feldblyum T.V."/>
            <person name="Hansen C.L."/>
            <person name="Craven M.B."/>
            <person name="Radune D."/>
            <person name="Vamathevan J.J."/>
            <person name="Khouri H.M."/>
            <person name="White O."/>
            <person name="Gruber T.M."/>
            <person name="Ketchum K.A."/>
            <person name="Venter J.C."/>
            <person name="Tettelin H."/>
            <person name="Bryant D.A."/>
            <person name="Fraser C.M."/>
        </authorList>
    </citation>
    <scope>NUCLEOTIDE SEQUENCE [LARGE SCALE GENOMIC DNA]</scope>
    <source>
        <strain>ATCC 49652 / DSM 12025 / NBRC 103806 / TLS</strain>
    </source>
</reference>
<sequence length="172" mass="18090">MSKKSGRNIKPGELNLKEKLVHINRTAKVVKGGKRFGFNAIVVVGDKEGHVGYGLGKANEVQDAIAKGVEDGKKNVIKVPIVKGTIPHPIVAKYGSAKVLMKPATPGTGLIAGGAVRAVLEMAGIHDILTKSLGSSNPHNVVKAAIKGLQNISDANDVAERRSKSLKEVFES</sequence>
<keyword id="KW-1185">Reference proteome</keyword>
<keyword id="KW-0687">Ribonucleoprotein</keyword>
<keyword id="KW-0689">Ribosomal protein</keyword>
<keyword id="KW-0694">RNA-binding</keyword>
<keyword id="KW-0699">rRNA-binding</keyword>
<proteinExistence type="inferred from homology"/>
<evidence type="ECO:0000255" key="1">
    <source>
        <dbReference type="HAMAP-Rule" id="MF_01307"/>
    </source>
</evidence>
<evidence type="ECO:0000305" key="2"/>
<feature type="chain" id="PRO_0000131499" description="Small ribosomal subunit protein uS5">
    <location>
        <begin position="1"/>
        <end position="172"/>
    </location>
</feature>
<feature type="domain" description="S5 DRBM" evidence="1">
    <location>
        <begin position="16"/>
        <end position="79"/>
    </location>
</feature>